<evidence type="ECO:0000250" key="1"/>
<evidence type="ECO:0000256" key="2">
    <source>
        <dbReference type="SAM" id="MobiDB-lite"/>
    </source>
</evidence>
<evidence type="ECO:0000305" key="3"/>
<protein>
    <recommendedName>
        <fullName>Ninja-family protein 1</fullName>
    </recommendedName>
</protein>
<feature type="chain" id="PRO_0000369619" description="Ninja-family protein 1">
    <location>
        <begin position="1"/>
        <end position="393"/>
    </location>
</feature>
<feature type="region of interest" description="Disordered" evidence="2">
    <location>
        <begin position="1"/>
        <end position="27"/>
    </location>
</feature>
<feature type="region of interest" description="Disordered" evidence="2">
    <location>
        <begin position="155"/>
        <end position="200"/>
    </location>
</feature>
<feature type="compositionally biased region" description="Basic and acidic residues" evidence="2">
    <location>
        <begin position="156"/>
        <end position="170"/>
    </location>
</feature>
<reference key="1">
    <citation type="journal article" date="2009" name="Plant Mol. Biol.">
        <title>Insights into corn genes derived from large-scale cDNA sequencing.</title>
        <authorList>
            <person name="Alexandrov N.N."/>
            <person name="Brover V.V."/>
            <person name="Freidin S."/>
            <person name="Troukhan M.E."/>
            <person name="Tatarinova T.V."/>
            <person name="Zhang H."/>
            <person name="Swaller T.J."/>
            <person name="Lu Y.-P."/>
            <person name="Bouck J."/>
            <person name="Flavell R.B."/>
            <person name="Feldmann K.A."/>
        </authorList>
    </citation>
    <scope>NUCLEOTIDE SEQUENCE [LARGE SCALE MRNA]</scope>
</reference>
<reference key="2">
    <citation type="submission" date="2008-07" db="EMBL/GenBank/DDBJ databases">
        <title>Maize full-length cDNA project.</title>
        <authorList>
            <person name="Yu Y."/>
            <person name="Currie J."/>
            <person name="Lomeli R."/>
            <person name="Angelova A."/>
            <person name="Collura K."/>
            <person name="Wissotski M."/>
            <person name="Campos D."/>
            <person name="Kudrna D."/>
            <person name="Golser W."/>
            <person name="Ashely E."/>
            <person name="Haller K."/>
            <person name="Descour A."/>
            <person name="Fernandes J."/>
            <person name="Zuccolo A."/>
            <person name="Soderlund C."/>
            <person name="Walbot V."/>
        </authorList>
    </citation>
    <scope>NUCLEOTIDE SEQUENCE [LARGE SCALE MRNA]</scope>
    <source>
        <strain>cv. B73</strain>
    </source>
</reference>
<sequence>MEGFSRDLLCGIGKGDAPPPEKRPGQLREEMEEVELSLGLSLGGRFGLDRKGSKLPRSSSVAAMLTTPVEVPAPPSLSRASSLPVQAEASEVERKQGLDGWGSCREGGGLGVQHAARLPASGNPSSASSVGEGQILQGTLMRTSSLPAVIEASGNDDWKKRKEAQSLKRLEVKKKRIERRNSLACNTSKEAAGQSPKEMNANTDKLVSSDETIVSANESHSSGKHLVKGLPPKYQATITSEDSSSAMRKKPNSAFKGTAITEEQNSSSSVPSSGEAISSVTAPSLPLLSLVPITATLGSREDQSILGRAGARANGMGDVERRMMQEMPGVFTKGLSNGSRVEGFLYKYSKGEVRIVCICHGSFLTPSEFVEHAGAGKVDNPLRHIVVSATPNL</sequence>
<comment type="subcellular location">
    <subcellularLocation>
        <location evidence="1">Nucleus</location>
    </subcellularLocation>
</comment>
<comment type="similarity">
    <text evidence="3">Belongs to the Ninja family.</text>
</comment>
<organism>
    <name type="scientific">Zea mays</name>
    <name type="common">Maize</name>
    <dbReference type="NCBI Taxonomy" id="4577"/>
    <lineage>
        <taxon>Eukaryota</taxon>
        <taxon>Viridiplantae</taxon>
        <taxon>Streptophyta</taxon>
        <taxon>Embryophyta</taxon>
        <taxon>Tracheophyta</taxon>
        <taxon>Spermatophyta</taxon>
        <taxon>Magnoliopsida</taxon>
        <taxon>Liliopsida</taxon>
        <taxon>Poales</taxon>
        <taxon>Poaceae</taxon>
        <taxon>PACMAD clade</taxon>
        <taxon>Panicoideae</taxon>
        <taxon>Andropogonodae</taxon>
        <taxon>Andropogoneae</taxon>
        <taxon>Tripsacinae</taxon>
        <taxon>Zea</taxon>
    </lineage>
</organism>
<proteinExistence type="evidence at transcript level"/>
<keyword id="KW-0539">Nucleus</keyword>
<keyword id="KW-1185">Reference proteome</keyword>
<dbReference type="EMBL" id="EU966492">
    <property type="protein sequence ID" value="ACG38610.1"/>
    <property type="molecule type" value="mRNA"/>
</dbReference>
<dbReference type="EMBL" id="BT034091">
    <property type="protein sequence ID" value="ACF79096.1"/>
    <property type="molecule type" value="mRNA"/>
</dbReference>
<dbReference type="EMBL" id="BT035045">
    <property type="protein sequence ID" value="ACF80050.1"/>
    <property type="molecule type" value="mRNA"/>
</dbReference>
<dbReference type="RefSeq" id="NP_001131584.1">
    <property type="nucleotide sequence ID" value="NM_001138112.2"/>
</dbReference>
<dbReference type="FunCoup" id="B4FAF3">
    <property type="interactions" value="6"/>
</dbReference>
<dbReference type="PaxDb" id="4577-AC197717.3_FGP002"/>
<dbReference type="EnsemblPlants" id="Zm00001eb400170_T006">
    <property type="protein sequence ID" value="Zm00001eb400170_P006"/>
    <property type="gene ID" value="Zm00001eb400170"/>
</dbReference>
<dbReference type="GeneID" id="100192929"/>
<dbReference type="Gramene" id="Zm00001eb400170_T006">
    <property type="protein sequence ID" value="Zm00001eb400170_P006"/>
    <property type="gene ID" value="Zm00001eb400170"/>
</dbReference>
<dbReference type="KEGG" id="zma:100192929"/>
<dbReference type="eggNOG" id="ENOG502QW6K">
    <property type="taxonomic scope" value="Eukaryota"/>
</dbReference>
<dbReference type="HOGENOM" id="CLU_034695_0_0_1"/>
<dbReference type="InParanoid" id="B4FAF3"/>
<dbReference type="OMA" id="CICHGTF"/>
<dbReference type="OrthoDB" id="667358at2759"/>
<dbReference type="Proteomes" id="UP000007305">
    <property type="component" value="Chromosome 9"/>
</dbReference>
<dbReference type="ExpressionAtlas" id="B4FAF3">
    <property type="expression patterns" value="baseline and differential"/>
</dbReference>
<dbReference type="GO" id="GO:0005634">
    <property type="term" value="C:nucleus"/>
    <property type="evidence" value="ECO:0007669"/>
    <property type="project" value="UniProtKB-SubCell"/>
</dbReference>
<dbReference type="GO" id="GO:0007165">
    <property type="term" value="P:signal transduction"/>
    <property type="evidence" value="ECO:0007669"/>
    <property type="project" value="InterPro"/>
</dbReference>
<dbReference type="InterPro" id="IPR031307">
    <property type="entry name" value="Ninja_fam"/>
</dbReference>
<dbReference type="InterPro" id="IPR012463">
    <property type="entry name" value="Ninja_motif"/>
</dbReference>
<dbReference type="InterPro" id="IPR032310">
    <property type="entry name" value="NLS_NINJA_AFP-like"/>
</dbReference>
<dbReference type="InterPro" id="IPR032308">
    <property type="entry name" value="TDBD"/>
</dbReference>
<dbReference type="PANTHER" id="PTHR31413">
    <property type="entry name" value="AFP HOMOLOG 2"/>
    <property type="match status" value="1"/>
</dbReference>
<dbReference type="PANTHER" id="PTHR31413:SF49">
    <property type="entry name" value="NINJA-FAMILY PROTEIN MODD"/>
    <property type="match status" value="1"/>
</dbReference>
<dbReference type="Pfam" id="PF07897">
    <property type="entry name" value="EAR"/>
    <property type="match status" value="1"/>
</dbReference>
<dbReference type="Pfam" id="PF16136">
    <property type="entry name" value="NLS_NINJA_AFP"/>
    <property type="match status" value="1"/>
</dbReference>
<dbReference type="Pfam" id="PF16135">
    <property type="entry name" value="TDBD"/>
    <property type="match status" value="1"/>
</dbReference>
<accession>B4FAF3</accession>
<name>NNJA1_MAIZE</name>